<reference key="1">
    <citation type="submission" date="2008-04" db="EMBL/GenBank/DDBJ databases">
        <title>Complete sequence of Yersinia pseudotuberculosis PB1/+.</title>
        <authorList>
            <person name="Copeland A."/>
            <person name="Lucas S."/>
            <person name="Lapidus A."/>
            <person name="Glavina del Rio T."/>
            <person name="Dalin E."/>
            <person name="Tice H."/>
            <person name="Bruce D."/>
            <person name="Goodwin L."/>
            <person name="Pitluck S."/>
            <person name="Munk A.C."/>
            <person name="Brettin T."/>
            <person name="Detter J.C."/>
            <person name="Han C."/>
            <person name="Tapia R."/>
            <person name="Schmutz J."/>
            <person name="Larimer F."/>
            <person name="Land M."/>
            <person name="Hauser L."/>
            <person name="Challacombe J.F."/>
            <person name="Green L."/>
            <person name="Lindler L.E."/>
            <person name="Nikolich M.P."/>
            <person name="Richardson P."/>
        </authorList>
    </citation>
    <scope>NUCLEOTIDE SEQUENCE [LARGE SCALE GENOMIC DNA]</scope>
    <source>
        <strain>PB1/+</strain>
    </source>
</reference>
<accession>B2K295</accession>
<organism>
    <name type="scientific">Yersinia pseudotuberculosis serotype IB (strain PB1/+)</name>
    <dbReference type="NCBI Taxonomy" id="502801"/>
    <lineage>
        <taxon>Bacteria</taxon>
        <taxon>Pseudomonadati</taxon>
        <taxon>Pseudomonadota</taxon>
        <taxon>Gammaproteobacteria</taxon>
        <taxon>Enterobacterales</taxon>
        <taxon>Yersiniaceae</taxon>
        <taxon>Yersinia</taxon>
    </lineage>
</organism>
<comment type="function">
    <text evidence="1">Catalyzes the transfer of succinyl-CoA to arginine to produce N(2)-succinylarginine.</text>
</comment>
<comment type="catalytic activity">
    <reaction evidence="1">
        <text>succinyl-CoA + L-arginine = N(2)-succinyl-L-arginine + CoA + H(+)</text>
        <dbReference type="Rhea" id="RHEA:15185"/>
        <dbReference type="ChEBI" id="CHEBI:15378"/>
        <dbReference type="ChEBI" id="CHEBI:32682"/>
        <dbReference type="ChEBI" id="CHEBI:57287"/>
        <dbReference type="ChEBI" id="CHEBI:57292"/>
        <dbReference type="ChEBI" id="CHEBI:58241"/>
        <dbReference type="EC" id="2.3.1.109"/>
    </reaction>
</comment>
<comment type="pathway">
    <text evidence="1">Amino-acid degradation; L-arginine degradation via AST pathway; L-glutamate and succinate from L-arginine: step 1/5.</text>
</comment>
<comment type="similarity">
    <text evidence="1">Belongs to the arginine N-succinyltransferase family.</text>
</comment>
<dbReference type="EC" id="2.3.1.109" evidence="1"/>
<dbReference type="EMBL" id="CP001048">
    <property type="protein sequence ID" value="ACC88978.1"/>
    <property type="molecule type" value="Genomic_DNA"/>
</dbReference>
<dbReference type="RefSeq" id="WP_011192371.1">
    <property type="nucleotide sequence ID" value="NZ_CP009780.1"/>
</dbReference>
<dbReference type="SMR" id="B2K295"/>
<dbReference type="GeneID" id="49786051"/>
<dbReference type="KEGG" id="ypb:YPTS_2012"/>
<dbReference type="PATRIC" id="fig|502801.10.peg.1398"/>
<dbReference type="UniPathway" id="UPA00185">
    <property type="reaction ID" value="UER00279"/>
</dbReference>
<dbReference type="GO" id="GO:0008791">
    <property type="term" value="F:arginine N-succinyltransferase activity"/>
    <property type="evidence" value="ECO:0007669"/>
    <property type="project" value="UniProtKB-UniRule"/>
</dbReference>
<dbReference type="GO" id="GO:0019544">
    <property type="term" value="P:arginine catabolic process to glutamate"/>
    <property type="evidence" value="ECO:0007669"/>
    <property type="project" value="UniProtKB-UniRule"/>
</dbReference>
<dbReference type="GO" id="GO:0019545">
    <property type="term" value="P:arginine catabolic process to succinate"/>
    <property type="evidence" value="ECO:0007669"/>
    <property type="project" value="UniProtKB-UniRule"/>
</dbReference>
<dbReference type="Gene3D" id="2.40.40.20">
    <property type="match status" value="1"/>
</dbReference>
<dbReference type="HAMAP" id="MF_01171">
    <property type="entry name" value="AstA"/>
    <property type="match status" value="1"/>
</dbReference>
<dbReference type="InterPro" id="IPR016181">
    <property type="entry name" value="Acyl_CoA_acyltransferase"/>
</dbReference>
<dbReference type="InterPro" id="IPR007041">
    <property type="entry name" value="Arg_succinylTrfase_AstA/AruG"/>
</dbReference>
<dbReference type="InterPro" id="IPR017650">
    <property type="entry name" value="Arginine_N-succinylTrfase"/>
</dbReference>
<dbReference type="NCBIfam" id="TIGR03243">
    <property type="entry name" value="arg_catab_AOST"/>
    <property type="match status" value="1"/>
</dbReference>
<dbReference type="NCBIfam" id="TIGR03244">
    <property type="entry name" value="arg_catab_AstA"/>
    <property type="match status" value="1"/>
</dbReference>
<dbReference type="NCBIfam" id="NF007770">
    <property type="entry name" value="PRK10456.1"/>
    <property type="match status" value="1"/>
</dbReference>
<dbReference type="PANTHER" id="PTHR30420:SF1">
    <property type="entry name" value="ARGININE N-SUCCINYLTRANSFERASE"/>
    <property type="match status" value="1"/>
</dbReference>
<dbReference type="PANTHER" id="PTHR30420">
    <property type="entry name" value="N-SUCCINYLARGININE DIHYDROLASE"/>
    <property type="match status" value="1"/>
</dbReference>
<dbReference type="Pfam" id="PF04958">
    <property type="entry name" value="AstA"/>
    <property type="match status" value="1"/>
</dbReference>
<dbReference type="SUPFAM" id="SSF55729">
    <property type="entry name" value="Acyl-CoA N-acyltransferases (Nat)"/>
    <property type="match status" value="1"/>
</dbReference>
<feature type="chain" id="PRO_1000137992" description="Arginine N-succinyltransferase">
    <location>
        <begin position="1"/>
        <end position="350"/>
    </location>
</feature>
<feature type="active site" description="Proton donor" evidence="1">
    <location>
        <position position="229"/>
    </location>
</feature>
<feature type="binding site" evidence="1">
    <location>
        <position position="125"/>
    </location>
    <ligand>
        <name>succinyl-CoA</name>
        <dbReference type="ChEBI" id="CHEBI:57292"/>
    </ligand>
</feature>
<name>ASTA_YERPB</name>
<gene>
    <name evidence="1" type="primary">astA</name>
    <name type="ordered locus">YPTS_2012</name>
</gene>
<evidence type="ECO:0000255" key="1">
    <source>
        <dbReference type="HAMAP-Rule" id="MF_01171"/>
    </source>
</evidence>
<sequence>MMKVRPVERRDLADIFELAGKTGVGMTSLPQNEQHLAARIERALNTWQGSLDPGEQGYLFVLEDSEQQKVVGVSAIEVAVGLNDPWYNFRVGTLVHASKALNVYKSVPTLFLSNDHTGYSELCTLFLDPDYRKDKNGPFLSKVRFLFIAAFRQYFSRKVIAEMRGYTDEQGRSPFWESVGRHFFSIEFAKADYLSGTGQKAFIAELMPKHPLYVDFLAEEARAVIGQVHPHTAPARAVLETEGLQYQGYVDIFDGGPTLEANTDDVRAVRDSSKRTVVIKDYDIEDYDIDPNGRLYLVANDHYHHFRAILMNTHLSDERLRLTPESAEALGVAAGDSVRIVSLFAPETKR</sequence>
<keyword id="KW-0012">Acyltransferase</keyword>
<keyword id="KW-0056">Arginine metabolism</keyword>
<keyword id="KW-0808">Transferase</keyword>
<proteinExistence type="inferred from homology"/>
<protein>
    <recommendedName>
        <fullName evidence="1">Arginine N-succinyltransferase</fullName>
        <shortName evidence="1">AST</shortName>
        <ecNumber evidence="1">2.3.1.109</ecNumber>
    </recommendedName>
    <alternativeName>
        <fullName evidence="1">AOST</fullName>
    </alternativeName>
</protein>